<reference key="1">
    <citation type="journal article" date="2007" name="PLoS Genet.">
        <title>Patterns and implications of gene gain and loss in the evolution of Prochlorococcus.</title>
        <authorList>
            <person name="Kettler G.C."/>
            <person name="Martiny A.C."/>
            <person name="Huang K."/>
            <person name="Zucker J."/>
            <person name="Coleman M.L."/>
            <person name="Rodrigue S."/>
            <person name="Chen F."/>
            <person name="Lapidus A."/>
            <person name="Ferriera S."/>
            <person name="Johnson J."/>
            <person name="Steglich C."/>
            <person name="Church G.M."/>
            <person name="Richardson P."/>
            <person name="Chisholm S.W."/>
        </authorList>
    </citation>
    <scope>NUCLEOTIDE SEQUENCE [LARGE SCALE GENOMIC DNA]</scope>
    <source>
        <strain>MIT 9515</strain>
    </source>
</reference>
<gene>
    <name evidence="1" type="primary">pyrH</name>
    <name type="ordered locus">P9515_05861</name>
</gene>
<accession>A2BVI4</accession>
<dbReference type="EC" id="2.7.4.22" evidence="1"/>
<dbReference type="EMBL" id="CP000552">
    <property type="protein sequence ID" value="ABM71795.1"/>
    <property type="molecule type" value="Genomic_DNA"/>
</dbReference>
<dbReference type="RefSeq" id="WP_011819902.1">
    <property type="nucleotide sequence ID" value="NC_008817.1"/>
</dbReference>
<dbReference type="SMR" id="A2BVI4"/>
<dbReference type="STRING" id="167542.P9515_05861"/>
<dbReference type="GeneID" id="60200707"/>
<dbReference type="KEGG" id="pmc:P9515_05861"/>
<dbReference type="eggNOG" id="COG0528">
    <property type="taxonomic scope" value="Bacteria"/>
</dbReference>
<dbReference type="HOGENOM" id="CLU_033861_0_0_3"/>
<dbReference type="OrthoDB" id="9807458at2"/>
<dbReference type="UniPathway" id="UPA00159">
    <property type="reaction ID" value="UER00275"/>
</dbReference>
<dbReference type="Proteomes" id="UP000001589">
    <property type="component" value="Chromosome"/>
</dbReference>
<dbReference type="GO" id="GO:0005737">
    <property type="term" value="C:cytoplasm"/>
    <property type="evidence" value="ECO:0007669"/>
    <property type="project" value="UniProtKB-SubCell"/>
</dbReference>
<dbReference type="GO" id="GO:0005524">
    <property type="term" value="F:ATP binding"/>
    <property type="evidence" value="ECO:0007669"/>
    <property type="project" value="UniProtKB-KW"/>
</dbReference>
<dbReference type="GO" id="GO:0033862">
    <property type="term" value="F:UMP kinase activity"/>
    <property type="evidence" value="ECO:0007669"/>
    <property type="project" value="UniProtKB-EC"/>
</dbReference>
<dbReference type="GO" id="GO:0044210">
    <property type="term" value="P:'de novo' CTP biosynthetic process"/>
    <property type="evidence" value="ECO:0007669"/>
    <property type="project" value="UniProtKB-UniRule"/>
</dbReference>
<dbReference type="GO" id="GO:0006225">
    <property type="term" value="P:UDP biosynthetic process"/>
    <property type="evidence" value="ECO:0007669"/>
    <property type="project" value="TreeGrafter"/>
</dbReference>
<dbReference type="CDD" id="cd04254">
    <property type="entry name" value="AAK_UMPK-PyrH-Ec"/>
    <property type="match status" value="1"/>
</dbReference>
<dbReference type="FunFam" id="3.40.1160.10:FF:000001">
    <property type="entry name" value="Uridylate kinase"/>
    <property type="match status" value="1"/>
</dbReference>
<dbReference type="Gene3D" id="3.40.1160.10">
    <property type="entry name" value="Acetylglutamate kinase-like"/>
    <property type="match status" value="1"/>
</dbReference>
<dbReference type="HAMAP" id="MF_01220_B">
    <property type="entry name" value="PyrH_B"/>
    <property type="match status" value="1"/>
</dbReference>
<dbReference type="InterPro" id="IPR036393">
    <property type="entry name" value="AceGlu_kinase-like_sf"/>
</dbReference>
<dbReference type="InterPro" id="IPR001048">
    <property type="entry name" value="Asp/Glu/Uridylate_kinase"/>
</dbReference>
<dbReference type="InterPro" id="IPR011817">
    <property type="entry name" value="Uridylate_kinase"/>
</dbReference>
<dbReference type="InterPro" id="IPR015963">
    <property type="entry name" value="Uridylate_kinase_bac"/>
</dbReference>
<dbReference type="NCBIfam" id="TIGR02075">
    <property type="entry name" value="pyrH_bact"/>
    <property type="match status" value="1"/>
</dbReference>
<dbReference type="PANTHER" id="PTHR42833">
    <property type="entry name" value="URIDYLATE KINASE"/>
    <property type="match status" value="1"/>
</dbReference>
<dbReference type="PANTHER" id="PTHR42833:SF4">
    <property type="entry name" value="URIDYLATE KINASE PUMPKIN, CHLOROPLASTIC"/>
    <property type="match status" value="1"/>
</dbReference>
<dbReference type="Pfam" id="PF00696">
    <property type="entry name" value="AA_kinase"/>
    <property type="match status" value="1"/>
</dbReference>
<dbReference type="PIRSF" id="PIRSF005650">
    <property type="entry name" value="Uridylate_kin"/>
    <property type="match status" value="1"/>
</dbReference>
<dbReference type="SUPFAM" id="SSF53633">
    <property type="entry name" value="Carbamate kinase-like"/>
    <property type="match status" value="1"/>
</dbReference>
<sequence length="234" mass="25286">MTYKRVLLKLSGEALMGDKPYGIDPAIVQSIAEDVEKVIANNVQLAIVVGGGNIFRGLKGSADGMDRATADYVGMLATVMNAISLQDGLERVGVETRVQTAIEMQEIAEPYIRRRAMRHLEKGRVVVFGGGCGNPFFTTDTTAALRAAEINAEVVMKATKVDGVYDRDPNKFNEAKKYSSLSYQQVLSDEIAVMDSTAIALCKDNNIPIMVFDIFKKGNISRAVAGESIGSLIS</sequence>
<protein>
    <recommendedName>
        <fullName evidence="1">Uridylate kinase</fullName>
        <shortName evidence="1">UK</shortName>
        <ecNumber evidence="1">2.7.4.22</ecNumber>
    </recommendedName>
    <alternativeName>
        <fullName evidence="1">Uridine monophosphate kinase</fullName>
        <shortName evidence="1">UMP kinase</shortName>
        <shortName evidence="1">UMPK</shortName>
    </alternativeName>
</protein>
<keyword id="KW-0067">ATP-binding</keyword>
<keyword id="KW-0963">Cytoplasm</keyword>
<keyword id="KW-0418">Kinase</keyword>
<keyword id="KW-0547">Nucleotide-binding</keyword>
<keyword id="KW-0665">Pyrimidine biosynthesis</keyword>
<keyword id="KW-0808">Transferase</keyword>
<proteinExistence type="inferred from homology"/>
<feature type="chain" id="PRO_0000323923" description="Uridylate kinase">
    <location>
        <begin position="1"/>
        <end position="234"/>
    </location>
</feature>
<feature type="binding site" evidence="1">
    <location>
        <begin position="9"/>
        <end position="12"/>
    </location>
    <ligand>
        <name>ATP</name>
        <dbReference type="ChEBI" id="CHEBI:30616"/>
    </ligand>
</feature>
<feature type="binding site" evidence="1">
    <location>
        <position position="51"/>
    </location>
    <ligand>
        <name>UMP</name>
        <dbReference type="ChEBI" id="CHEBI:57865"/>
    </ligand>
</feature>
<feature type="binding site" evidence="1">
    <location>
        <position position="52"/>
    </location>
    <ligand>
        <name>ATP</name>
        <dbReference type="ChEBI" id="CHEBI:30616"/>
    </ligand>
</feature>
<feature type="binding site" evidence="1">
    <location>
        <position position="56"/>
    </location>
    <ligand>
        <name>ATP</name>
        <dbReference type="ChEBI" id="CHEBI:30616"/>
    </ligand>
</feature>
<feature type="binding site" evidence="1">
    <location>
        <position position="71"/>
    </location>
    <ligand>
        <name>UMP</name>
        <dbReference type="ChEBI" id="CHEBI:57865"/>
    </ligand>
</feature>
<feature type="binding site" evidence="1">
    <location>
        <begin position="132"/>
        <end position="139"/>
    </location>
    <ligand>
        <name>UMP</name>
        <dbReference type="ChEBI" id="CHEBI:57865"/>
    </ligand>
</feature>
<feature type="binding site" evidence="1">
    <location>
        <position position="159"/>
    </location>
    <ligand>
        <name>ATP</name>
        <dbReference type="ChEBI" id="CHEBI:30616"/>
    </ligand>
</feature>
<feature type="binding site" evidence="1">
    <location>
        <position position="165"/>
    </location>
    <ligand>
        <name>ATP</name>
        <dbReference type="ChEBI" id="CHEBI:30616"/>
    </ligand>
</feature>
<feature type="binding site" evidence="1">
    <location>
        <position position="168"/>
    </location>
    <ligand>
        <name>ATP</name>
        <dbReference type="ChEBI" id="CHEBI:30616"/>
    </ligand>
</feature>
<organism>
    <name type="scientific">Prochlorococcus marinus (strain MIT 9515)</name>
    <dbReference type="NCBI Taxonomy" id="167542"/>
    <lineage>
        <taxon>Bacteria</taxon>
        <taxon>Bacillati</taxon>
        <taxon>Cyanobacteriota</taxon>
        <taxon>Cyanophyceae</taxon>
        <taxon>Synechococcales</taxon>
        <taxon>Prochlorococcaceae</taxon>
        <taxon>Prochlorococcus</taxon>
    </lineage>
</organism>
<comment type="function">
    <text evidence="1">Catalyzes the reversible phosphorylation of UMP to UDP.</text>
</comment>
<comment type="catalytic activity">
    <reaction evidence="1">
        <text>UMP + ATP = UDP + ADP</text>
        <dbReference type="Rhea" id="RHEA:24400"/>
        <dbReference type="ChEBI" id="CHEBI:30616"/>
        <dbReference type="ChEBI" id="CHEBI:57865"/>
        <dbReference type="ChEBI" id="CHEBI:58223"/>
        <dbReference type="ChEBI" id="CHEBI:456216"/>
        <dbReference type="EC" id="2.7.4.22"/>
    </reaction>
</comment>
<comment type="activity regulation">
    <text evidence="1">Inhibited by UTP.</text>
</comment>
<comment type="pathway">
    <text evidence="1">Pyrimidine metabolism; CTP biosynthesis via de novo pathway; UDP from UMP (UMPK route): step 1/1.</text>
</comment>
<comment type="subunit">
    <text evidence="1">Homohexamer.</text>
</comment>
<comment type="subcellular location">
    <subcellularLocation>
        <location evidence="1">Cytoplasm</location>
    </subcellularLocation>
</comment>
<comment type="similarity">
    <text evidence="1">Belongs to the UMP kinase family.</text>
</comment>
<name>PYRH_PROM5</name>
<evidence type="ECO:0000255" key="1">
    <source>
        <dbReference type="HAMAP-Rule" id="MF_01220"/>
    </source>
</evidence>